<comment type="function">
    <text evidence="4 5 6 7 8 10 13 14 15 16 17">DNA deaminase (cytidine deaminase) which acts as an inhibitor of retrovirus replication and retrotransposon mobility via deaminase-dependent and -independent mechanisms (PubMed:16571802, PubMed:16920826, PubMed:18779051, PubMed:18827027, PubMed:20062055, PubMed:22915799, PubMed:29290613). The A3H-var/haplotype 2 exhibits antiviral activity against vif-deficient HIV-1 (PubMed:18299330, PubMed:21835787, PubMed:23097438, PubMed:29290613). After the penetration of retroviral nucleocapsids into target cells of infection and the initiation of reverse transcription, it can induce the conversion of cytosine to uracil in the minus-sense single-strand viral DNA, leading to G-to-A hypermutations in the subsequent plus-strand viral DNA (PubMed:18299330). The resultant detrimental levels of mutations in the proviral genome, along with a deamination-independent mechanism that works prior to the proviral integration, together exert efficient antiretroviral effects in infected target cells (PubMed:18299330). Selectively targets single-stranded DNA and does not deaminate double-stranded DNA or single- or double-stranded RNA (PubMed:20062055). Exhibits antiviral activity also against T-cell leukemia virus type 1 (HTLV-1) and may inhibit the mobility of LTR and non-LTR retrotransposons (PubMed:20062055, PubMed:22457529).</text>
</comment>
<comment type="catalytic activity">
    <reaction evidence="4 17">
        <text>a 2'-deoxycytidine in single-stranded DNA + H2O + H(+) = a 2'-deoxyuridine in single-stranded DNA + NH4(+)</text>
        <dbReference type="Rhea" id="RHEA:50948"/>
        <dbReference type="Rhea" id="RHEA-COMP:12846"/>
        <dbReference type="Rhea" id="RHEA-COMP:12847"/>
        <dbReference type="ChEBI" id="CHEBI:15377"/>
        <dbReference type="ChEBI" id="CHEBI:15378"/>
        <dbReference type="ChEBI" id="CHEBI:28938"/>
        <dbReference type="ChEBI" id="CHEBI:85452"/>
        <dbReference type="ChEBI" id="CHEBI:133902"/>
        <dbReference type="EC" id="3.5.4.38"/>
    </reaction>
</comment>
<comment type="cofactor">
    <cofactor evidence="17">
        <name>Zn(2+)</name>
        <dbReference type="ChEBI" id="CHEBI:29105"/>
    </cofactor>
</comment>
<comment type="activity regulation">
    <text evidence="17">APOBEC3H activity is regulated by RNA (PubMed:29290613). While RNA-binding inhibits the DNA deaminase activity, double-stranded RNA is required for HIV-1 restriction by promoting APOBEC3H homodimerization and packaging into retroviral nucleocapsids (PubMed:29290613).</text>
</comment>
<comment type="activity regulation">
    <text evidence="13 18">(Microbial infection) Antiviral activity is inhibited to some extent by the HIV-1 virion infectivity factor (VIF), that prevents its incorporation into progeny virions by both inhibiting its translation and/or by inducing its ubiquitination and subsequent degradation by the 26S proteasome.</text>
</comment>
<comment type="subunit">
    <text evidence="15 17">Homodimer (PubMed:29290613). Interacts with AGO1, AGO2 and AGO3 (PubMed:22915799).</text>
</comment>
<comment type="subcellular location">
    <subcellularLocation>
        <location evidence="12 13 17">Cytoplasm</location>
    </subcellularLocation>
    <subcellularLocation>
        <location evidence="7 12">Nucleus</location>
    </subcellularLocation>
    <subcellularLocation>
        <location evidence="15">Cytoplasm</location>
        <location evidence="15">P-body</location>
    </subcellularLocation>
    <text evidence="12">Haplotype 1 is distributed in both the nucleus and cytoplasm, whereas haplotype 2 is predominantly cytoplasmic.</text>
</comment>
<comment type="alternative products">
    <event type="alternative splicing"/>
    <isoform>
        <id>Q6NTF7-1</id>
        <name>1</name>
        <sequence type="displayed"/>
    </isoform>
    <isoform>
        <id>Q6NTF7-2</id>
        <name>2</name>
        <sequence type="described" ref="VSP_035034"/>
    </isoform>
    <isoform>
        <id>Q6NTF7-3</id>
        <name>3</name>
        <sequence type="described" ref="VSP_039975"/>
    </isoform>
    <isoform>
        <id>Q6NTF7-4</id>
        <name>4</name>
        <sequence type="described" ref="VSP_047044"/>
    </isoform>
</comment>
<comment type="tissue specificity">
    <text evidence="4 11">Expressed in lymphoid organs. Also detected in non-lymphoid tissues including lung, testis, ovary, fetal liver and skin.</text>
</comment>
<comment type="PTM">
    <text evidence="18">(Microbial infection) Following infection by some HIV-1 strains, such as isolate BRU/LAI, can be ubiquitinated by a cullin-5-RING E3 ubiquitin-protein ligase complex (ECS complex) hijacked by the HIV-1 Vif protein, leading to its degradation (PubMed:37640699). Ubiquitination by the ECS complex is however less efficent compared to APOBEC3G or APOBEC3G (PubMed:37640699).</text>
</comment>
<comment type="polymorphism">
    <text evidence="7 9">There are at least 4 different haplotypes in the human population (PubMed:18779051, PubMed:18945781). The allele A3H-var/haplotype 2 encodes a more stable protein which is able to block HIV-1 replication (PubMed:18779051, PubMed:18945781). The displayed allele (haplotype 1) is unstable and inefficient to block HIV-1 replication (PubMed:18779051, PubMed:18945781).</text>
</comment>
<comment type="miscellaneous">
    <text evidence="4">APOBEC3H from old world monkeys has retained its antiviral activity, while it is lost in other primates.</text>
</comment>
<comment type="miscellaneous">
    <text evidence="19">It is one of seven related genes or pseudogenes found in a cluster, thought to result from gene duplication, on chromosome 22.</text>
</comment>
<comment type="similarity">
    <text evidence="23">Belongs to the cytidine and deoxycytidylate deaminase family.</text>
</comment>
<evidence type="ECO:0000255" key="1"/>
<evidence type="ECO:0000255" key="2">
    <source>
        <dbReference type="PROSITE-ProRule" id="PRU01083"/>
    </source>
</evidence>
<evidence type="ECO:0000269" key="3">
    <source>
    </source>
</evidence>
<evidence type="ECO:0000269" key="4">
    <source>
    </source>
</evidence>
<evidence type="ECO:0000269" key="5">
    <source>
    </source>
</evidence>
<evidence type="ECO:0000269" key="6">
    <source>
    </source>
</evidence>
<evidence type="ECO:0000269" key="7">
    <source>
    </source>
</evidence>
<evidence type="ECO:0000269" key="8">
    <source>
    </source>
</evidence>
<evidence type="ECO:0000269" key="9">
    <source>
    </source>
</evidence>
<evidence type="ECO:0000269" key="10">
    <source>
    </source>
</evidence>
<evidence type="ECO:0000269" key="11">
    <source>
    </source>
</evidence>
<evidence type="ECO:0000269" key="12">
    <source>
    </source>
</evidence>
<evidence type="ECO:0000269" key="13">
    <source>
    </source>
</evidence>
<evidence type="ECO:0000269" key="14">
    <source>
    </source>
</evidence>
<evidence type="ECO:0000269" key="15">
    <source>
    </source>
</evidence>
<evidence type="ECO:0000269" key="16">
    <source>
    </source>
</evidence>
<evidence type="ECO:0000269" key="17">
    <source>
    </source>
</evidence>
<evidence type="ECO:0000269" key="18">
    <source>
    </source>
</evidence>
<evidence type="ECO:0000303" key="19">
    <source>
    </source>
</evidence>
<evidence type="ECO:0000303" key="20">
    <source>
    </source>
</evidence>
<evidence type="ECO:0000303" key="21">
    <source>
    </source>
</evidence>
<evidence type="ECO:0000303" key="22">
    <source>
    </source>
</evidence>
<evidence type="ECO:0000305" key="23"/>
<evidence type="ECO:0000312" key="24">
    <source>
        <dbReference type="HGNC" id="HGNC:24100"/>
    </source>
</evidence>
<evidence type="ECO:0007744" key="25">
    <source>
        <dbReference type="PDB" id="6B0B"/>
    </source>
</evidence>
<evidence type="ECO:0007744" key="26">
    <source>
        <dbReference type="PDB" id="6BBO"/>
    </source>
</evidence>
<evidence type="ECO:0007744" key="27">
    <source>
        <dbReference type="PDB" id="8FVI"/>
    </source>
</evidence>
<evidence type="ECO:0007829" key="28">
    <source>
        <dbReference type="PDB" id="5W45"/>
    </source>
</evidence>
<evidence type="ECO:0007829" key="29">
    <source>
        <dbReference type="PDB" id="6B0B"/>
    </source>
</evidence>
<evidence type="ECO:0007829" key="30">
    <source>
        <dbReference type="PDB" id="8FVI"/>
    </source>
</evidence>
<accession>Q6NTF7</accession>
<accession>B0QYP0</accession>
<accession>B0QYP1</accession>
<accession>B7TQM5</accession>
<accession>E9PF38</accession>
<accession>M4W6S4</accession>
<accession>Q5JYL9</accession>
<accession>Q6IC87</accession>
<proteinExistence type="evidence at protein level"/>
<reference key="1">
    <citation type="journal article" date="2009" name="J. Virol.">
        <title>Polymorphisms and splice variants influence the antiretroviral activity of human APOBEC3H.</title>
        <authorList>
            <person name="Harari A."/>
            <person name="Ooms M."/>
            <person name="Mulder L.C."/>
            <person name="Simon V."/>
        </authorList>
    </citation>
    <scope>NUCLEOTIDE SEQUENCE [MRNA] (ISOFORM 1)</scope>
    <scope>POLYMORPHISM</scope>
    <scope>ALTERNATIVE SPLICING</scope>
</reference>
<reference key="2">
    <citation type="journal article" date="2004" name="Genome Biol.">
        <title>A genome annotation-driven approach to cloning the human ORFeome.</title>
        <authorList>
            <person name="Collins J.E."/>
            <person name="Wright C.L."/>
            <person name="Edwards C.A."/>
            <person name="Davis M.P."/>
            <person name="Grinham J.A."/>
            <person name="Cole C.G."/>
            <person name="Goward M.E."/>
            <person name="Aguado B."/>
            <person name="Mallya M."/>
            <person name="Mokrab Y."/>
            <person name="Huckle E.J."/>
            <person name="Beare D.M."/>
            <person name="Dunham I."/>
        </authorList>
    </citation>
    <scope>NUCLEOTIDE SEQUENCE [LARGE SCALE MRNA] (ISOFORM 2)</scope>
    <scope>VARIANTS ASN-15 DEL; LEU-18; ARG-105 AND ASP-178</scope>
</reference>
<reference key="3">
    <citation type="submission" date="2012-12" db="EMBL/GenBank/DDBJ databases">
        <title>Sequence analysis of APOBEC-3 members in chronic HBV patients.</title>
        <authorList>
            <person name="Dad R."/>
            <person name="Sawal H.A."/>
            <person name="Rehman Z."/>
            <person name="Fahim A."/>
            <person name="Sadia H."/>
        </authorList>
    </citation>
    <scope>NUCLEOTIDE SEQUENCE [MRNA] (ISOFORM 1)</scope>
</reference>
<reference key="4">
    <citation type="journal article" date="1999" name="Nature">
        <title>The DNA sequence of human chromosome 22.</title>
        <authorList>
            <person name="Dunham I."/>
            <person name="Hunt A.R."/>
            <person name="Collins J.E."/>
            <person name="Bruskiewich R."/>
            <person name="Beare D.M."/>
            <person name="Clamp M."/>
            <person name="Smink L.J."/>
            <person name="Ainscough R."/>
            <person name="Almeida J.P."/>
            <person name="Babbage A.K."/>
            <person name="Bagguley C."/>
            <person name="Bailey J."/>
            <person name="Barlow K.F."/>
            <person name="Bates K.N."/>
            <person name="Beasley O.P."/>
            <person name="Bird C.P."/>
            <person name="Blakey S.E."/>
            <person name="Bridgeman A.M."/>
            <person name="Buck D."/>
            <person name="Burgess J."/>
            <person name="Burrill W.D."/>
            <person name="Burton J."/>
            <person name="Carder C."/>
            <person name="Carter N.P."/>
            <person name="Chen Y."/>
            <person name="Clark G."/>
            <person name="Clegg S.M."/>
            <person name="Cobley V.E."/>
            <person name="Cole C.G."/>
            <person name="Collier R.E."/>
            <person name="Connor R."/>
            <person name="Conroy D."/>
            <person name="Corby N.R."/>
            <person name="Coville G.J."/>
            <person name="Cox A.V."/>
            <person name="Davis J."/>
            <person name="Dawson E."/>
            <person name="Dhami P.D."/>
            <person name="Dockree C."/>
            <person name="Dodsworth S.J."/>
            <person name="Durbin R.M."/>
            <person name="Ellington A.G."/>
            <person name="Evans K.L."/>
            <person name="Fey J.M."/>
            <person name="Fleming K."/>
            <person name="French L."/>
            <person name="Garner A.A."/>
            <person name="Gilbert J.G.R."/>
            <person name="Goward M.E."/>
            <person name="Grafham D.V."/>
            <person name="Griffiths M.N.D."/>
            <person name="Hall C."/>
            <person name="Hall R.E."/>
            <person name="Hall-Tamlyn G."/>
            <person name="Heathcott R.W."/>
            <person name="Ho S."/>
            <person name="Holmes S."/>
            <person name="Hunt S.E."/>
            <person name="Jones M.C."/>
            <person name="Kershaw J."/>
            <person name="Kimberley A.M."/>
            <person name="King A."/>
            <person name="Laird G.K."/>
            <person name="Langford C.F."/>
            <person name="Leversha M.A."/>
            <person name="Lloyd C."/>
            <person name="Lloyd D.M."/>
            <person name="Martyn I.D."/>
            <person name="Mashreghi-Mohammadi M."/>
            <person name="Matthews L.H."/>
            <person name="Mccann O.T."/>
            <person name="Mcclay J."/>
            <person name="Mclaren S."/>
            <person name="McMurray A.A."/>
            <person name="Milne S.A."/>
            <person name="Mortimore B.J."/>
            <person name="Odell C.N."/>
            <person name="Pavitt R."/>
            <person name="Pearce A.V."/>
            <person name="Pearson D."/>
            <person name="Phillimore B.J.C.T."/>
            <person name="Phillips S.H."/>
            <person name="Plumb R.W."/>
            <person name="Ramsay H."/>
            <person name="Ramsey Y."/>
            <person name="Rogers L."/>
            <person name="Ross M.T."/>
            <person name="Scott C.E."/>
            <person name="Sehra H.K."/>
            <person name="Skuce C.D."/>
            <person name="Smalley S."/>
            <person name="Smith M.L."/>
            <person name="Soderlund C."/>
            <person name="Spragon L."/>
            <person name="Steward C.A."/>
            <person name="Sulston J.E."/>
            <person name="Swann R.M."/>
            <person name="Vaudin M."/>
            <person name="Wall M."/>
            <person name="Wallis J.M."/>
            <person name="Whiteley M.N."/>
            <person name="Willey D.L."/>
            <person name="Williams L."/>
            <person name="Williams S.A."/>
            <person name="Williamson H."/>
            <person name="Wilmer T.E."/>
            <person name="Wilming L."/>
            <person name="Wright C.L."/>
            <person name="Hubbard T."/>
            <person name="Bentley D.R."/>
            <person name="Beck S."/>
            <person name="Rogers J."/>
            <person name="Shimizu N."/>
            <person name="Minoshima S."/>
            <person name="Kawasaki K."/>
            <person name="Sasaki T."/>
            <person name="Asakawa S."/>
            <person name="Kudoh J."/>
            <person name="Shintani A."/>
            <person name="Shibuya K."/>
            <person name="Yoshizaki Y."/>
            <person name="Aoki N."/>
            <person name="Mitsuyama S."/>
            <person name="Roe B.A."/>
            <person name="Chen F."/>
            <person name="Chu L."/>
            <person name="Crabtree J."/>
            <person name="Deschamps S."/>
            <person name="Do A."/>
            <person name="Do T."/>
            <person name="Dorman A."/>
            <person name="Fang F."/>
            <person name="Fu Y."/>
            <person name="Hu P."/>
            <person name="Hua A."/>
            <person name="Kenton S."/>
            <person name="Lai H."/>
            <person name="Lao H.I."/>
            <person name="Lewis J."/>
            <person name="Lewis S."/>
            <person name="Lin S.-P."/>
            <person name="Loh P."/>
            <person name="Malaj E."/>
            <person name="Nguyen T."/>
            <person name="Pan H."/>
            <person name="Phan S."/>
            <person name="Qi S."/>
            <person name="Qian Y."/>
            <person name="Ray L."/>
            <person name="Ren Q."/>
            <person name="Shaull S."/>
            <person name="Sloan D."/>
            <person name="Song L."/>
            <person name="Wang Q."/>
            <person name="Wang Y."/>
            <person name="Wang Z."/>
            <person name="White J."/>
            <person name="Willingham D."/>
            <person name="Wu H."/>
            <person name="Yao Z."/>
            <person name="Zhan M."/>
            <person name="Zhang G."/>
            <person name="Chissoe S."/>
            <person name="Murray J."/>
            <person name="Miller N."/>
            <person name="Minx P."/>
            <person name="Fulton R."/>
            <person name="Johnson D."/>
            <person name="Bemis G."/>
            <person name="Bentley D."/>
            <person name="Bradshaw H."/>
            <person name="Bourne S."/>
            <person name="Cordes M."/>
            <person name="Du Z."/>
            <person name="Fulton L."/>
            <person name="Goela D."/>
            <person name="Graves T."/>
            <person name="Hawkins J."/>
            <person name="Hinds K."/>
            <person name="Kemp K."/>
            <person name="Latreille P."/>
            <person name="Layman D."/>
            <person name="Ozersky P."/>
            <person name="Rohlfing T."/>
            <person name="Scheet P."/>
            <person name="Walker C."/>
            <person name="Wamsley A."/>
            <person name="Wohldmann P."/>
            <person name="Pepin K."/>
            <person name="Nelson J."/>
            <person name="Korf I."/>
            <person name="Bedell J.A."/>
            <person name="Hillier L.W."/>
            <person name="Mardis E."/>
            <person name="Waterston R."/>
            <person name="Wilson R."/>
            <person name="Emanuel B.S."/>
            <person name="Shaikh T."/>
            <person name="Kurahashi H."/>
            <person name="Saitta S."/>
            <person name="Budarf M.L."/>
            <person name="McDermid H.E."/>
            <person name="Johnson A."/>
            <person name="Wong A.C.C."/>
            <person name="Morrow B.E."/>
            <person name="Edelmann L."/>
            <person name="Kim U.J."/>
            <person name="Shizuya H."/>
            <person name="Simon M.I."/>
            <person name="Dumanski J.P."/>
            <person name="Peyrard M."/>
            <person name="Kedra D."/>
            <person name="Seroussi E."/>
            <person name="Fransson I."/>
            <person name="Tapia I."/>
            <person name="Bruder C.E."/>
            <person name="O'Brien K.P."/>
            <person name="Wilkinson P."/>
            <person name="Bodenteich A."/>
            <person name="Hartman K."/>
            <person name="Hu X."/>
            <person name="Khan A.S."/>
            <person name="Lane L."/>
            <person name="Tilahun Y."/>
            <person name="Wright H."/>
        </authorList>
    </citation>
    <scope>NUCLEOTIDE SEQUENCE [LARGE SCALE GENOMIC DNA]</scope>
</reference>
<reference key="5">
    <citation type="journal article" date="2004" name="Genome Res.">
        <title>The status, quality, and expansion of the NIH full-length cDNA project: the Mammalian Gene Collection (MGC).</title>
        <authorList>
            <consortium name="The MGC Project Team"/>
        </authorList>
    </citation>
    <scope>NUCLEOTIDE SEQUENCE [LARGE SCALE MRNA] (ISOFORMS 2 AND 3)</scope>
    <source>
        <tissue>Astrocyte</tissue>
    </source>
</reference>
<reference key="6">
    <citation type="journal article" date="2003" name="Trends Genet.">
        <title>Messenger RNA editing in mammals: new members of the APOBEC family seeking roles in the family business.</title>
        <authorList>
            <person name="Wedekind J.E."/>
            <person name="Dance G.S.C."/>
            <person name="Sowden M.P."/>
            <person name="Smith H.C."/>
        </authorList>
    </citation>
    <scope>REVIEW ON APOBEC FAMILY</scope>
</reference>
<reference key="7">
    <citation type="journal article" date="2006" name="J. Virol.">
        <title>Adaptive evolution and antiviral activity of the conserved mammalian cytidine deaminase APOBEC3H.</title>
        <authorList>
            <person name="OhAinle M."/>
            <person name="Kerns J.A."/>
            <person name="Malik H.S."/>
            <person name="Emerman M."/>
        </authorList>
    </citation>
    <scope>FUNCTION</scope>
    <scope>CATALYTIC ACTIVITY</scope>
    <scope>TISSUE SPECIFICITY</scope>
</reference>
<reference key="8">
    <citation type="journal article" date="2006" name="J. Virol.">
        <title>Identification of APOBEC3DE as another antiretroviral factor from the human APOBEC family.</title>
        <authorList>
            <person name="Dang Y."/>
            <person name="Wang X."/>
            <person name="Esselman W.J."/>
            <person name="Zheng Y.-H."/>
        </authorList>
    </citation>
    <scope>FUNCTION</scope>
</reference>
<reference key="9">
    <citation type="journal article" date="2008" name="Annu. Rev. Immunol.">
        <title>The APOBEC3 cytidine deaminases: an innate defensive network opposing exogenous retroviruses and endogenous retroelements.</title>
        <authorList>
            <person name="Chiu Y.L."/>
            <person name="Greene W.C."/>
        </authorList>
    </citation>
    <scope>REVIEW</scope>
</reference>
<reference key="10">
    <citation type="journal article" date="2008" name="Cell Host Microbe">
        <title>Antiretroelement activity of APOBEC3H was lost twice in recent human evolution.</title>
        <authorList>
            <person name="OhAinle M."/>
            <person name="Kerns J.A."/>
            <person name="Li M.M."/>
            <person name="Malik H.S."/>
            <person name="Emerman M."/>
        </authorList>
    </citation>
    <scope>FUNCTION</scope>
    <scope>SUBCELLULAR LOCATION</scope>
    <scope>POLYMORPHISM</scope>
    <scope>CHARACTERIZATION OF VARIANTS ASN-15 DEL AND ARG-105</scope>
</reference>
<reference key="11">
    <citation type="journal article" date="2008" name="J. Biol. Chem.">
        <title>Human cytidine deaminase APOBEC3H restricts HIV-1 replication.</title>
        <authorList>
            <person name="Dang Y."/>
            <person name="Siew L.M."/>
            <person name="Wang X."/>
            <person name="Han Y."/>
            <person name="Lampen R."/>
            <person name="Zheng Y.H."/>
        </authorList>
    </citation>
    <scope>FUNCTION IN HIV-1 RESTRICTION</scope>
</reference>
<reference key="12">
    <citation type="journal article" date="2009" name="FASEB J.">
        <title>Sole copy of Z2-type human cytidine deaminase APOBEC3H has inhibitory activity against retrotransposons and HIV-1.</title>
        <authorList>
            <person name="Tan L."/>
            <person name="Sarkis P.T."/>
            <person name="Wang T."/>
            <person name="Tian C."/>
            <person name="Yu X.F."/>
        </authorList>
    </citation>
    <scope>FUNCTION</scope>
    <scope>CHARACTERIZATION OF ALLELE A3H-VAR</scope>
    <scope>MUTAGENESIS OF GLU-56</scope>
</reference>
<reference key="13">
    <citation type="journal article" date="2010" name="Nucleic Acids Res.">
        <title>Quantitative profiling of the full APOBEC3 mRNA repertoire in lymphocytes and tissues: implications for HIV-1 restriction.</title>
        <authorList>
            <person name="Refsland E.W."/>
            <person name="Stenglein M.D."/>
            <person name="Shindo K."/>
            <person name="Albin J.S."/>
            <person name="Brown W.L."/>
            <person name="Harris R.S."/>
        </authorList>
    </citation>
    <scope>TISSUE SPECIFICITY</scope>
</reference>
<reference key="14">
    <citation type="journal article" date="2010" name="Nat. Struct. Mol. Biol.">
        <title>APOBEC3 proteins mediate the clearance of foreign DNA from human cells.</title>
        <authorList>
            <person name="Stenglein M.D."/>
            <person name="Burns M.B."/>
            <person name="Li M."/>
            <person name="Lengyel J."/>
            <person name="Harris R.S."/>
        </authorList>
    </citation>
    <scope>FUNCTION IN RETROTRANSPOSITION</scope>
</reference>
<reference key="15">
    <citation type="journal article" date="2011" name="J. Virol.">
        <title>Polymorphism in human APOBEC3H affects a phenotype dominant for subcellular localization and antiviral activity.</title>
        <authorList>
            <person name="Li M.M."/>
            <person name="Emerman M."/>
        </authorList>
    </citation>
    <scope>CHARACTERIZATION OF ALLELE A3H-VAR</scope>
    <scope>SUBCELLULAR LOCATION</scope>
</reference>
<reference key="16">
    <citation type="journal article" date="2011" name="J. Virol.">
        <title>Human and rhesus APOBEC3D, APOBEC3F, APOBEC3G, and APOBEC3H demonstrate a conserved capacity to restrict Vif-deficient HIV-1.</title>
        <authorList>
            <person name="Hultquist J.F."/>
            <person name="Lengyel J.A."/>
            <person name="Refsland E.W."/>
            <person name="LaRue R.S."/>
            <person name="Lackey L."/>
            <person name="Brown W.L."/>
            <person name="Harris R.S."/>
        </authorList>
    </citation>
    <scope>FUNCTION IN HIV-1 RESTRICTION</scope>
    <scope>SUBCELLULAR LOCATION</scope>
    <scope>ACTIVITY REGULATION (MICROBIAL INFECTION)</scope>
</reference>
<reference key="17">
    <citation type="journal article" date="2011" name="Student Perspec. Contemp. Virol.">
        <title>Cytosine deaminases APOBEC3A, APOBEC3C, and APOBEC3H: Current understanding of their functional roles.</title>
        <authorList>
            <person name="Love R."/>
        </authorList>
    </citation>
    <scope>REVIEW</scope>
</reference>
<reference key="18">
    <citation type="journal article" date="2012" name="Front. Microbiol.">
        <title>Retroelements versus APOBEC3 family members: No great escape from the magnificent seven.</title>
        <authorList>
            <person name="Arias J.F."/>
            <person name="Koyama T."/>
            <person name="Kinomoto M."/>
            <person name="Tokunaga K."/>
        </authorList>
    </citation>
    <scope>REVIEW</scope>
</reference>
<reference key="19">
    <citation type="journal article" date="2012" name="J. Virol.">
        <title>APOBEC3A, APOBEC3B, and APOBEC3H haplotype 2 restrict human T-lymphotropic virus type 1.</title>
        <authorList>
            <person name="Ooms M."/>
            <person name="Krikoni A."/>
            <person name="Kress A.K."/>
            <person name="Simon V."/>
            <person name="Muenk C."/>
        </authorList>
    </citation>
    <scope>FUNCTION IN HTLV-1 RESTRICTION</scope>
</reference>
<reference key="20">
    <citation type="journal article" date="2012" name="J. Virol.">
        <title>HIV-1 replication and APOBEC3 antiviral activity are not regulated by P bodies.</title>
        <authorList>
            <person name="Phalora P.K."/>
            <person name="Sherer N.M."/>
            <person name="Wolinsky S.M."/>
            <person name="Swanson C.M."/>
            <person name="Malim M.H."/>
        </authorList>
    </citation>
    <scope>FUNCTION</scope>
    <scope>SUBCELLULAR LOCATION</scope>
    <scope>INTERACTION WITH AGO1; AGO2 AND AGO3</scope>
</reference>
<reference key="21">
    <citation type="journal article" date="2012" name="Semin. Cell Dev. Biol.">
        <title>Functions and regulation of the APOBEC family of proteins.</title>
        <authorList>
            <person name="Smith H.C."/>
            <person name="Bennett R.P."/>
            <person name="Kizilyer A."/>
            <person name="McDougall W.M."/>
            <person name="Prohaska K.M."/>
        </authorList>
    </citation>
    <scope>REVIEW</scope>
</reference>
<reference key="22">
    <citation type="journal article" date="2013" name="J. Virol.">
        <title>APOBEC3G restricts HIV-1 to a greater extent than APOBEC3F and APOBEC3DE in human primary CD4+ t cells and macrophages.</title>
        <authorList>
            <person name="Chaipan C."/>
            <person name="Smith J.L."/>
            <person name="Hu W.S."/>
            <person name="Pathak V.K."/>
        </authorList>
    </citation>
    <scope>FUNCTION IN HIV-1 RESTRICTION</scope>
</reference>
<reference evidence="25 26" key="23">
    <citation type="journal article" date="2018" name="Mol. Cell">
        <title>The antiviral and cancer genomic DNA deaminase APOBEC3H is regulated by an RNA-mediated dimerization mechanism.</title>
        <authorList>
            <person name="Shaban N.M."/>
            <person name="Shi K."/>
            <person name="Lauer K.V."/>
            <person name="Carpenter M.A."/>
            <person name="Richards C.M."/>
            <person name="Salamango D."/>
            <person name="Wang J."/>
            <person name="Lopresti M.W."/>
            <person name="Banerjee S."/>
            <person name="Levin-Klein R."/>
            <person name="Brown W.L."/>
            <person name="Aihara H."/>
            <person name="Harris R.S."/>
        </authorList>
    </citation>
    <scope>X-RAY CRYSTALLOGRAPHY (3.28 ANGSTROMS) OF 1-181 IN COMPLEX WITH RNA AND ZINC</scope>
    <scope>COFACTOR</scope>
    <scope>ACTIVE SITE</scope>
    <scope>FUNCTION</scope>
    <scope>CATALYTIC ACTIVITY</scope>
    <scope>ACTIVITY REGULATION</scope>
    <scope>SUBUNIT</scope>
    <scope>SUBCELLULAR LOCATION</scope>
    <scope>MUTAGENESIS OF ARG-18; ARG-20; ARG-21; PRO-22; TYR-23; TYR-24; PRO-25; ARG-26; LYS-50; LYS-51; LYS-52; GLU-56; ARG-110; LEU-111; TYR-112; TYR-113; HIS-114; TRP-115; ARG-171; ALA-172; ILE-173; ARG-175; ARG-176 AND ARG-179</scope>
</reference>
<reference evidence="27" key="24">
    <citation type="journal article" date="2023" name="Nat. Commun.">
        <title>Structural basis of HIV-1 Vif-mediated E3 ligase targeting of host APOBEC3H.</title>
        <authorList>
            <person name="Ito F."/>
            <person name="Alvarez-Cabrera A.L."/>
            <person name="Kim K."/>
            <person name="Zhou Z.H."/>
            <person name="Chen X.S."/>
        </authorList>
    </citation>
    <scope>STRUCTURE BY ELECTRON MICROSCOPY (3.24 ANGSTROMS) OF 1-181 IN COMPLEX WITH ELOB; ELOC; CBFB AND HIV-1 VIF</scope>
    <scope>UBIQUITINATION (MICROBIAL INFECTION)</scope>
    <scope>MUTAGENESIS OF 50-LYS-LYS-51; GLU-70; TRP-90; ASP-94; LYS-97; LEU-125 AND SER-129</scope>
</reference>
<dbReference type="EC" id="3.5.4.38" evidence="4 17"/>
<dbReference type="EMBL" id="FJ376613">
    <property type="protein sequence ID" value="ACK77774.1"/>
    <property type="molecule type" value="mRNA"/>
</dbReference>
<dbReference type="EMBL" id="CR456481">
    <property type="protein sequence ID" value="CAG30367.3"/>
    <property type="molecule type" value="mRNA"/>
</dbReference>
<dbReference type="EMBL" id="KC329529">
    <property type="protein sequence ID" value="AGI04217.1"/>
    <property type="molecule type" value="mRNA"/>
</dbReference>
<dbReference type="EMBL" id="AL031846">
    <property type="status" value="NOT_ANNOTATED_CDS"/>
    <property type="molecule type" value="Genomic_DNA"/>
</dbReference>
<dbReference type="EMBL" id="KF457460">
    <property type="status" value="NOT_ANNOTATED_CDS"/>
    <property type="molecule type" value="Genomic_DNA"/>
</dbReference>
<dbReference type="EMBL" id="BC069023">
    <property type="protein sequence ID" value="AAH69023.1"/>
    <property type="molecule type" value="mRNA"/>
</dbReference>
<dbReference type="EMBL" id="BQ052182">
    <property type="status" value="NOT_ANNOTATED_CDS"/>
    <property type="molecule type" value="mRNA"/>
</dbReference>
<dbReference type="CCDS" id="CCDS13985.1">
    <molecule id="Q6NTF7-3"/>
</dbReference>
<dbReference type="CCDS" id="CCDS54530.1">
    <molecule id="Q6NTF7-1"/>
</dbReference>
<dbReference type="CCDS" id="CCDS54531.1">
    <molecule id="Q6NTF7-2"/>
</dbReference>
<dbReference type="CCDS" id="CCDS54532.1">
    <molecule id="Q6NTF7-4"/>
</dbReference>
<dbReference type="RefSeq" id="NP_001159474.2">
    <molecule id="Q6NTF7-2"/>
    <property type="nucleotide sequence ID" value="NM_001166002.3"/>
</dbReference>
<dbReference type="RefSeq" id="NP_001159475.2">
    <molecule id="Q6NTF7-1"/>
    <property type="nucleotide sequence ID" value="NM_001166003.3"/>
</dbReference>
<dbReference type="RefSeq" id="NP_001159476.2">
    <property type="nucleotide sequence ID" value="NM_001166004.2"/>
</dbReference>
<dbReference type="RefSeq" id="NP_861438.3">
    <molecule id="Q6NTF7-3"/>
    <property type="nucleotide sequence ID" value="NM_181773.5"/>
</dbReference>
<dbReference type="RefSeq" id="XP_011528294.1">
    <molecule id="Q6NTF7-1"/>
    <property type="nucleotide sequence ID" value="XM_011529992.4"/>
</dbReference>
<dbReference type="PDB" id="5W45">
    <property type="method" value="X-ray"/>
    <property type="resolution" value="2.49 A"/>
    <property type="chains" value="A/B=2-177"/>
</dbReference>
<dbReference type="PDB" id="6B0B">
    <property type="method" value="X-ray"/>
    <property type="resolution" value="3.28 A"/>
    <property type="chains" value="A/E=1-181"/>
</dbReference>
<dbReference type="PDB" id="6BBO">
    <property type="method" value="X-ray"/>
    <property type="resolution" value="3.43 A"/>
    <property type="chains" value="A/E=3-181"/>
</dbReference>
<dbReference type="PDB" id="8FVI">
    <property type="method" value="EM"/>
    <property type="resolution" value="3.24 A"/>
    <property type="chains" value="A=1-181"/>
</dbReference>
<dbReference type="PDBsum" id="5W45"/>
<dbReference type="PDBsum" id="6B0B"/>
<dbReference type="PDBsum" id="6BBO"/>
<dbReference type="PDBsum" id="8FVI"/>
<dbReference type="EMDB" id="EMD-29488"/>
<dbReference type="EMDB" id="EMD-29490"/>
<dbReference type="SMR" id="Q6NTF7"/>
<dbReference type="BioGRID" id="127899">
    <property type="interactions" value="4"/>
</dbReference>
<dbReference type="FunCoup" id="Q6NTF7">
    <property type="interactions" value="36"/>
</dbReference>
<dbReference type="STRING" id="9606.ENSP00000385741"/>
<dbReference type="iPTMnet" id="Q6NTF7"/>
<dbReference type="PhosphoSitePlus" id="Q6NTF7"/>
<dbReference type="BioMuta" id="APOBEC3H"/>
<dbReference type="DMDM" id="205371798"/>
<dbReference type="MassIVE" id="Q6NTF7"/>
<dbReference type="PaxDb" id="9606-ENSP00000385741"/>
<dbReference type="PeptideAtlas" id="Q6NTF7"/>
<dbReference type="ProteomicsDB" id="66670">
    <molecule id="Q6NTF7-1"/>
</dbReference>
<dbReference type="Antibodypedia" id="26556">
    <property type="antibodies" value="48 antibodies from 18 providers"/>
</dbReference>
<dbReference type="DNASU" id="164668"/>
<dbReference type="Ensembl" id="ENST00000348946.8">
    <molecule id="Q6NTF7-2"/>
    <property type="protein sequence ID" value="ENSP00000216123.5"/>
    <property type="gene ID" value="ENSG00000100298.16"/>
</dbReference>
<dbReference type="Ensembl" id="ENST00000401756.5">
    <molecule id="Q6NTF7-1"/>
    <property type="protein sequence ID" value="ENSP00000385741.1"/>
    <property type="gene ID" value="ENSG00000100298.16"/>
</dbReference>
<dbReference type="Ensembl" id="ENST00000442487.8">
    <molecule id="Q6NTF7-3"/>
    <property type="protein sequence ID" value="ENSP00000411754.3"/>
    <property type="gene ID" value="ENSG00000100298.16"/>
</dbReference>
<dbReference type="Ensembl" id="ENST00000613677.4">
    <molecule id="Q6NTF7-1"/>
    <property type="protein sequence ID" value="ENSP00000483689.1"/>
    <property type="gene ID" value="ENSG00000100298.16"/>
</dbReference>
<dbReference type="GeneID" id="164668"/>
<dbReference type="KEGG" id="hsa:164668"/>
<dbReference type="MANE-Select" id="ENST00000442487.8">
    <molecule id="Q6NTF7-3"/>
    <property type="protein sequence ID" value="ENSP00000411754.3"/>
    <property type="RefSeq nucleotide sequence ID" value="NM_181773.5"/>
    <property type="RefSeq protein sequence ID" value="NP_861438.3"/>
</dbReference>
<dbReference type="UCSC" id="uc021wps.2">
    <molecule id="Q6NTF7-1"/>
    <property type="organism name" value="human"/>
</dbReference>
<dbReference type="UCSC" id="uc062ejr.1">
    <property type="organism name" value="human"/>
</dbReference>
<dbReference type="AGR" id="HGNC:24100"/>
<dbReference type="CTD" id="164668"/>
<dbReference type="DisGeNET" id="164668"/>
<dbReference type="GeneCards" id="APOBEC3H"/>
<dbReference type="HGNC" id="HGNC:24100">
    <property type="gene designation" value="APOBEC3H"/>
</dbReference>
<dbReference type="HPA" id="ENSG00000100298">
    <property type="expression patterns" value="Low tissue specificity"/>
</dbReference>
<dbReference type="MIM" id="610976">
    <property type="type" value="gene"/>
</dbReference>
<dbReference type="neXtProt" id="NX_Q6NTF7"/>
<dbReference type="OpenTargets" id="ENSG00000100298"/>
<dbReference type="PharmGKB" id="PA162376694"/>
<dbReference type="VEuPathDB" id="HostDB:ENSG00000100298"/>
<dbReference type="eggNOG" id="ENOG502TFVZ">
    <property type="taxonomic scope" value="Eukaryota"/>
</dbReference>
<dbReference type="GeneTree" id="ENSGT00940000162772"/>
<dbReference type="HOGENOM" id="CLU_080056_4_0_1"/>
<dbReference type="InParanoid" id="Q6NTF7"/>
<dbReference type="OMA" id="HVQGCYI"/>
<dbReference type="OrthoDB" id="9445293at2759"/>
<dbReference type="PAN-GO" id="Q6NTF7">
    <property type="GO annotations" value="12 GO annotations based on evolutionary models"/>
</dbReference>
<dbReference type="PhylomeDB" id="Q6NTF7"/>
<dbReference type="TreeFam" id="TF331356"/>
<dbReference type="BRENDA" id="3.5.4.38">
    <property type="organism ID" value="2681"/>
</dbReference>
<dbReference type="PathwayCommons" id="Q6NTF7"/>
<dbReference type="Reactome" id="R-HSA-72200">
    <property type="pathway name" value="mRNA Editing: C to U Conversion"/>
</dbReference>
<dbReference type="Reactome" id="R-HSA-75094">
    <property type="pathway name" value="Formation of the Editosome"/>
</dbReference>
<dbReference type="SignaLink" id="Q6NTF7"/>
<dbReference type="SIGNOR" id="Q6NTF7"/>
<dbReference type="BioGRID-ORCS" id="164668">
    <property type="hits" value="6 hits in 1142 CRISPR screens"/>
</dbReference>
<dbReference type="GeneWiki" id="APOBEC3H"/>
<dbReference type="GenomeRNAi" id="164668"/>
<dbReference type="Pharos" id="Q6NTF7">
    <property type="development level" value="Tbio"/>
</dbReference>
<dbReference type="PRO" id="PR:Q6NTF7"/>
<dbReference type="Proteomes" id="UP000005640">
    <property type="component" value="Chromosome 22"/>
</dbReference>
<dbReference type="RNAct" id="Q6NTF7">
    <property type="molecule type" value="protein"/>
</dbReference>
<dbReference type="Bgee" id="ENSG00000100298">
    <property type="expression patterns" value="Expressed in granulocyte and 91 other cell types or tissues"/>
</dbReference>
<dbReference type="ExpressionAtlas" id="Q6NTF7">
    <property type="expression patterns" value="baseline and differential"/>
</dbReference>
<dbReference type="GO" id="GO:0005737">
    <property type="term" value="C:cytoplasm"/>
    <property type="evidence" value="ECO:0000314"/>
    <property type="project" value="UniProtKB"/>
</dbReference>
<dbReference type="GO" id="GO:0005829">
    <property type="term" value="C:cytosol"/>
    <property type="evidence" value="ECO:0000314"/>
    <property type="project" value="HPA"/>
</dbReference>
<dbReference type="GO" id="GO:0005654">
    <property type="term" value="C:nucleoplasm"/>
    <property type="evidence" value="ECO:0000314"/>
    <property type="project" value="HPA"/>
</dbReference>
<dbReference type="GO" id="GO:0005634">
    <property type="term" value="C:nucleus"/>
    <property type="evidence" value="ECO:0000314"/>
    <property type="project" value="UniProtKB"/>
</dbReference>
<dbReference type="GO" id="GO:0000932">
    <property type="term" value="C:P-body"/>
    <property type="evidence" value="ECO:0000314"/>
    <property type="project" value="UniProtKB"/>
</dbReference>
<dbReference type="GO" id="GO:0004126">
    <property type="term" value="F:cytidine deaminase activity"/>
    <property type="evidence" value="ECO:0000314"/>
    <property type="project" value="UniProtKB"/>
</dbReference>
<dbReference type="GO" id="GO:0003723">
    <property type="term" value="F:RNA binding"/>
    <property type="evidence" value="ECO:0000318"/>
    <property type="project" value="GO_Central"/>
</dbReference>
<dbReference type="GO" id="GO:0008270">
    <property type="term" value="F:zinc ion binding"/>
    <property type="evidence" value="ECO:0007669"/>
    <property type="project" value="InterPro"/>
</dbReference>
<dbReference type="GO" id="GO:0044355">
    <property type="term" value="P:clearance of foreign intracellular DNA"/>
    <property type="evidence" value="ECO:0000314"/>
    <property type="project" value="GO_Central"/>
</dbReference>
<dbReference type="GO" id="GO:0016554">
    <property type="term" value="P:cytidine to uridine editing"/>
    <property type="evidence" value="ECO:0000318"/>
    <property type="project" value="GO_Central"/>
</dbReference>
<dbReference type="GO" id="GO:0051607">
    <property type="term" value="P:defense response to virus"/>
    <property type="evidence" value="ECO:0000314"/>
    <property type="project" value="UniProtKB"/>
</dbReference>
<dbReference type="GO" id="GO:0070383">
    <property type="term" value="P:DNA cytosine deamination"/>
    <property type="evidence" value="ECO:0000314"/>
    <property type="project" value="UniProtKB"/>
</dbReference>
<dbReference type="GO" id="GO:0045087">
    <property type="term" value="P:innate immune response"/>
    <property type="evidence" value="ECO:0007669"/>
    <property type="project" value="UniProtKB-KW"/>
</dbReference>
<dbReference type="GO" id="GO:0044828">
    <property type="term" value="P:negative regulation by host of viral genome replication"/>
    <property type="evidence" value="ECO:0000315"/>
    <property type="project" value="UniProtKB"/>
</dbReference>
<dbReference type="GO" id="GO:0045869">
    <property type="term" value="P:negative regulation of single stranded viral RNA replication via double stranded DNA intermediate"/>
    <property type="evidence" value="ECO:0000314"/>
    <property type="project" value="UniProtKB"/>
</dbReference>
<dbReference type="GO" id="GO:0010526">
    <property type="term" value="P:transposable element silencing"/>
    <property type="evidence" value="ECO:0000314"/>
    <property type="project" value="UniProtKB"/>
</dbReference>
<dbReference type="CDD" id="cd01283">
    <property type="entry name" value="cytidine_deaminase"/>
    <property type="match status" value="1"/>
</dbReference>
<dbReference type="FunFam" id="3.40.140.10:FF:000047">
    <property type="entry name" value="Apolipoprotein B editing enzyme catalytic polypeptide-like 3H"/>
    <property type="match status" value="1"/>
</dbReference>
<dbReference type="Gene3D" id="3.40.140.10">
    <property type="entry name" value="Cytidine Deaminase, domain 2"/>
    <property type="match status" value="1"/>
</dbReference>
<dbReference type="InterPro" id="IPR016192">
    <property type="entry name" value="APOBEC/CMP_deaminase_Zn-bd"/>
</dbReference>
<dbReference type="InterPro" id="IPR041512">
    <property type="entry name" value="APOBEC3H"/>
</dbReference>
<dbReference type="InterPro" id="IPR050610">
    <property type="entry name" value="APOBEC_Cyt_Deaminase"/>
</dbReference>
<dbReference type="InterPro" id="IPR002125">
    <property type="entry name" value="CMP_dCMP_dom"/>
</dbReference>
<dbReference type="InterPro" id="IPR016193">
    <property type="entry name" value="Cytidine_deaminase-like"/>
</dbReference>
<dbReference type="PANTHER" id="PTHR13857:SF43">
    <property type="entry name" value="DNA DC-DU-EDITING ENZYME APOBEC-3H"/>
    <property type="match status" value="1"/>
</dbReference>
<dbReference type="PANTHER" id="PTHR13857">
    <property type="entry name" value="MRNA EDITING ENZYME"/>
    <property type="match status" value="1"/>
</dbReference>
<dbReference type="Pfam" id="PF18771">
    <property type="entry name" value="APOBEC3"/>
    <property type="match status" value="1"/>
</dbReference>
<dbReference type="SUPFAM" id="SSF53927">
    <property type="entry name" value="Cytidine deaminase-like"/>
    <property type="match status" value="1"/>
</dbReference>
<dbReference type="PROSITE" id="PS00903">
    <property type="entry name" value="CYT_DCMP_DEAMINASES_1"/>
    <property type="match status" value="1"/>
</dbReference>
<dbReference type="PROSITE" id="PS51747">
    <property type="entry name" value="CYT_DCMP_DEAMINASES_2"/>
    <property type="match status" value="1"/>
</dbReference>
<feature type="chain" id="PRO_0000291663" description="DNA dC-&gt;dU-editing enzyme APOBEC-3H">
    <location>
        <begin position="1"/>
        <end position="200"/>
    </location>
</feature>
<feature type="domain" description="CMP/dCMP-type deaminase" evidence="2">
    <location>
        <begin position="4"/>
        <end position="126"/>
    </location>
</feature>
<feature type="coiled-coil region" evidence="1">
    <location>
        <begin position="160"/>
        <end position="182"/>
    </location>
</feature>
<feature type="active site" description="Proton donor" evidence="17 25 26">
    <location>
        <position position="56"/>
    </location>
</feature>
<feature type="binding site" evidence="17 25 26">
    <location>
        <position position="54"/>
    </location>
    <ligand>
        <name>Zn(2+)</name>
        <dbReference type="ChEBI" id="CHEBI:29105"/>
        <note>catalytic</note>
    </ligand>
</feature>
<feature type="binding site" evidence="17 25 26">
    <location>
        <position position="85"/>
    </location>
    <ligand>
        <name>Zn(2+)</name>
        <dbReference type="ChEBI" id="CHEBI:29105"/>
        <note>catalytic</note>
    </ligand>
</feature>
<feature type="binding site" evidence="17 25 26">
    <location>
        <position position="88"/>
    </location>
    <ligand>
        <name>Zn(2+)</name>
        <dbReference type="ChEBI" id="CHEBI:29105"/>
        <note>catalytic</note>
    </ligand>
</feature>
<feature type="splice variant" id="VSP_047044" description="In isoform 4." evidence="23">
    <original>EFADCWENFVDHEKPLSFNPYKMLEELDKNSRAIKRRLERIKIPGVRAQGRYMDILCDAEV</original>
    <variation>NSRGTCAGSLHGYIV</variation>
    <location>
        <begin position="140"/>
        <end position="200"/>
    </location>
</feature>
<feature type="splice variant" id="VSP_035034" description="In isoform 2." evidence="20 21">
    <original>IPGVRAQGRYMDILCDAEV</original>
    <variation>S</variation>
    <location>
        <begin position="182"/>
        <end position="200"/>
    </location>
</feature>
<feature type="splice variant" id="VSP_039975" description="In isoform 3." evidence="21">
    <original>IPGVRAQGRYMDILCDAEV</original>
    <variation>QS</variation>
    <location>
        <begin position="182"/>
        <end position="200"/>
    </location>
</feature>
<feature type="sequence variant" id="VAR_065622" description="Decreases protein stability." evidence="3 7">
    <location>
        <position position="15"/>
    </location>
</feature>
<feature type="sequence variant" id="VAR_032835" description="In dbSNP:rs139293." evidence="3">
    <original>R</original>
    <variation>L</variation>
    <location>
        <position position="18"/>
    </location>
</feature>
<feature type="sequence variant" id="VAR_032836" description="In allele A3H-Var; haplotype 2; allele presenting a higher expression and which is more effective in retrotransposons and HIV-1 restriction; increases protein stability; dbSNP:rs139297." evidence="3 7">
    <original>G</original>
    <variation>R</variation>
    <location>
        <position position="105"/>
    </location>
</feature>
<feature type="sequence variant" id="VAR_032837" description="In allele A3H-Var; haplotype 2; allele presenting a higher expression and more effective in retrotransposons and HIV-1 restriction; dbSNP:rs139298.">
    <original>K</original>
    <variation>E</variation>
    <location>
        <position position="121"/>
    </location>
</feature>
<feature type="sequence variant" id="VAR_032838" description="In dbSNP:rs139299.">
    <original>K</original>
    <variation>N</variation>
    <location>
        <position position="121"/>
    </location>
</feature>
<feature type="sequence variant" id="VAR_067444" description="In dbSNP:rs139300.">
    <original>E</original>
    <variation>K</variation>
    <location>
        <position position="140"/>
    </location>
</feature>
<feature type="sequence variant" id="VAR_032839" description="In allele A3H-Var; haplotype 2; allele presenting a higher expression and more effective in retrotransposons and HIV-1 restriction; dbSNP:rs139302." evidence="3">
    <original>E</original>
    <variation>D</variation>
    <location>
        <position position="178"/>
    </location>
</feature>
<feature type="mutagenesis site" description="Increased DNA deaminase activity." evidence="17">
    <original>R</original>
    <variation>E</variation>
    <location>
        <position position="18"/>
    </location>
</feature>
<feature type="mutagenesis site" description="Increased DNA deaminase activity." evidence="17">
    <original>R</original>
    <variation>E</variation>
    <location>
        <position position="20"/>
    </location>
</feature>
<feature type="mutagenesis site" description="Decreased DNA deaminase activity." evidence="17">
    <original>R</original>
    <variation>E</variation>
    <location>
        <position position="21"/>
    </location>
</feature>
<feature type="mutagenesis site" description="Decreased DNA deaminase activity." evidence="17">
    <original>P</original>
    <variation>A</variation>
    <location>
        <position position="22"/>
    </location>
</feature>
<feature type="mutagenesis site" description="Decreased DNA deaminase activity." evidence="17">
    <original>Y</original>
    <variation>A</variation>
    <location>
        <position position="23"/>
    </location>
</feature>
<feature type="mutagenesis site" description="Decreased DNA deaminase activity." evidence="17">
    <original>Y</original>
    <variation>A</variation>
    <location>
        <position position="24"/>
    </location>
</feature>
<feature type="mutagenesis site" description="Decreased DNA deaminase activity." evidence="17">
    <original>P</original>
    <variation>A</variation>
    <location>
        <position position="25"/>
    </location>
</feature>
<feature type="mutagenesis site" description="Does not affect the DNA deaminase activity." evidence="17">
    <original>R</original>
    <variation>E</variation>
    <location>
        <position position="26"/>
    </location>
</feature>
<feature type="mutagenesis site" description="Does not affect ubiquitination by an ECS complex hijacked by HIV-1 Vif." evidence="18">
    <original>KK</original>
    <variation>RR</variation>
    <location>
        <begin position="50"/>
        <end position="51"/>
    </location>
</feature>
<feature type="mutagenesis site" description="Does not affect the DNA deaminase activity." evidence="17">
    <original>K</original>
    <variation>E</variation>
    <location>
        <position position="50"/>
    </location>
</feature>
<feature type="mutagenesis site" description="Does not affect the DNA deaminase activity." evidence="17">
    <original>K</original>
    <variation>E</variation>
    <location>
        <position position="51"/>
    </location>
</feature>
<feature type="mutagenesis site" description="Does not affect the DNA deaminase activity." evidence="17">
    <original>K</original>
    <variation>E</variation>
    <location>
        <position position="52"/>
    </location>
</feature>
<feature type="mutagenesis site" description="Abolished DNA deaminase activity." evidence="17">
    <original>E</original>
    <variation>A</variation>
    <location>
        <position position="56"/>
    </location>
</feature>
<feature type="mutagenesis site" description="Reduces the ability to inhibit the retrotransposition of LINE-1 elements." evidence="8">
    <original>E</original>
    <variation>Q</variation>
    <location>
        <position position="56"/>
    </location>
</feature>
<feature type="mutagenesis site" description="Partial resistance to ubiquitination and degradation by an ECS complex hijacked by HIV-1 Vif." evidence="18">
    <original>E</original>
    <variation>R</variation>
    <location>
        <position position="70"/>
    </location>
</feature>
<feature type="mutagenesis site" description="Resistance to ubiquitination and degradation by an ECS complex hijacked by HIV-1 Vif." evidence="18">
    <original>W</original>
    <variation>A</variation>
    <location>
        <position position="90"/>
    </location>
</feature>
<feature type="mutagenesis site" description="Resistance to ubiquitination and degradation by an ECS complex hijacked by HIV-1 Vif." evidence="18">
    <original>D</original>
    <variation>A</variation>
    <location>
        <position position="94"/>
    </location>
</feature>
<feature type="mutagenesis site" description="Increased ubiquitination and degradation by an ECS complex hijacked by HIV-1 Vif." evidence="18">
    <original>K</original>
    <variation>Q</variation>
    <location>
        <position position="97"/>
    </location>
</feature>
<feature type="mutagenesis site" description="Decreased DNA deaminase activity." evidence="17">
    <original>R</original>
    <variation>E</variation>
    <location>
        <position position="110"/>
    </location>
</feature>
<feature type="mutagenesis site" description="Decreased DNA deaminase activity." evidence="17">
    <original>L</original>
    <variation>A</variation>
    <location>
        <position position="111"/>
    </location>
</feature>
<feature type="mutagenesis site" description="Decreased DNA deaminase activity." evidence="17">
    <original>Y</original>
    <variation>A</variation>
    <location>
        <position position="112"/>
    </location>
</feature>
<feature type="mutagenesis site" description="Decreased DNA deaminase activity." evidence="17">
    <original>Y</original>
    <variation>A</variation>
    <location>
        <position position="113"/>
    </location>
</feature>
<feature type="mutagenesis site" description="Increased DNA deaminase activity." evidence="17">
    <original>H</original>
    <variation>A</variation>
    <location>
        <position position="114"/>
    </location>
</feature>
<feature type="mutagenesis site" description="Increased DNA deaminase activity." evidence="17">
    <original>W</original>
    <variation>A</variation>
    <location>
        <position position="115"/>
    </location>
</feature>
<feature type="mutagenesis site" description="Resistance to ubiquitination and degradation by an ECS complex hijacked by HIV-1 Vif." evidence="18">
    <original>L</original>
    <variation>R</variation>
    <location>
        <position position="125"/>
    </location>
</feature>
<feature type="mutagenesis site" description="Resistance to ubiquitination and degradation by an ECS complex hijacked by HIV-1 Vif." evidence="18">
    <original>S</original>
    <variation>R</variation>
    <location>
        <position position="129"/>
    </location>
</feature>
<feature type="mutagenesis site" description="Increased DNA deaminase activity." evidence="17">
    <original>R</original>
    <variation>E</variation>
    <location>
        <position position="171"/>
    </location>
</feature>
<feature type="mutagenesis site" description="Increased DNA deaminase activity." evidence="17">
    <original>A</original>
    <variation>E</variation>
    <location>
        <position position="172"/>
    </location>
</feature>
<feature type="mutagenesis site" description="Increased DNA deaminase activity." evidence="17">
    <original>I</original>
    <variation>A</variation>
    <variation>E</variation>
    <location>
        <position position="173"/>
    </location>
</feature>
<feature type="mutagenesis site" description="Increased DNA deaminase activity." evidence="17">
    <original>R</original>
    <variation>E</variation>
    <location>
        <position position="175"/>
    </location>
</feature>
<feature type="mutagenesis site" description="Increased DNA deaminase activity." evidence="17">
    <original>R</original>
    <variation>E</variation>
    <location>
        <position position="176"/>
    </location>
</feature>
<feature type="mutagenesis site" description="Increased DNA deaminase activity." evidence="17">
    <original>R</original>
    <variation>E</variation>
    <location>
        <position position="179"/>
    </location>
</feature>
<feature type="sequence conflict" description="In Ref. 2; CAG30367." evidence="23" ref="2">
    <original>K</original>
    <variation>D</variation>
    <location>
        <position position="121"/>
    </location>
</feature>
<feature type="helix" evidence="28">
    <location>
        <begin position="6"/>
        <end position="13"/>
    </location>
</feature>
<feature type="strand" evidence="29">
    <location>
        <begin position="21"/>
        <end position="24"/>
    </location>
</feature>
<feature type="strand" evidence="28">
    <location>
        <begin position="29"/>
        <end position="36"/>
    </location>
</feature>
<feature type="turn" evidence="29">
    <location>
        <begin position="37"/>
        <end position="40"/>
    </location>
</feature>
<feature type="strand" evidence="28">
    <location>
        <begin position="43"/>
        <end position="48"/>
    </location>
</feature>
<feature type="strand" evidence="30">
    <location>
        <begin position="51"/>
        <end position="53"/>
    </location>
</feature>
<feature type="helix" evidence="28">
    <location>
        <begin position="55"/>
        <end position="66"/>
    </location>
</feature>
<feature type="strand" evidence="30">
    <location>
        <begin position="70"/>
        <end position="72"/>
    </location>
</feature>
<feature type="strand" evidence="28">
    <location>
        <begin position="74"/>
        <end position="82"/>
    </location>
</feature>
<feature type="helix" evidence="28">
    <location>
        <begin position="86"/>
        <end position="98"/>
    </location>
</feature>
<feature type="strand" evidence="28">
    <location>
        <begin position="102"/>
        <end position="110"/>
    </location>
</feature>
<feature type="helix" evidence="28">
    <location>
        <begin position="117"/>
        <end position="129"/>
    </location>
</feature>
<feature type="strand" evidence="28">
    <location>
        <begin position="133"/>
        <end position="135"/>
    </location>
</feature>
<feature type="helix" evidence="28">
    <location>
        <begin position="138"/>
        <end position="148"/>
    </location>
</feature>
<feature type="helix" evidence="28">
    <location>
        <begin position="159"/>
        <end position="177"/>
    </location>
</feature>
<gene>
    <name evidence="22 24" type="primary">APOBEC3H</name>
</gene>
<organism>
    <name type="scientific">Homo sapiens</name>
    <name type="common">Human</name>
    <dbReference type="NCBI Taxonomy" id="9606"/>
    <lineage>
        <taxon>Eukaryota</taxon>
        <taxon>Metazoa</taxon>
        <taxon>Chordata</taxon>
        <taxon>Craniata</taxon>
        <taxon>Vertebrata</taxon>
        <taxon>Euteleostomi</taxon>
        <taxon>Mammalia</taxon>
        <taxon>Eutheria</taxon>
        <taxon>Euarchontoglires</taxon>
        <taxon>Primates</taxon>
        <taxon>Haplorrhini</taxon>
        <taxon>Catarrhini</taxon>
        <taxon>Hominidae</taxon>
        <taxon>Homo</taxon>
    </lineage>
</organism>
<name>ABC3H_HUMAN</name>
<protein>
    <recommendedName>
        <fullName>DNA dC-&gt;dU-editing enzyme APOBEC-3H</fullName>
        <ecNumber evidence="4 17">3.5.4.38</ecNumber>
    </recommendedName>
    <alternativeName>
        <fullName>APOBEC-related protein 10</fullName>
        <shortName>ARP-10</shortName>
    </alternativeName>
    <alternativeName>
        <fullName>Apolipoprotein B mRNA-editing enzyme catalytic polypeptide-like 3H</fullName>
        <shortName>A3H</shortName>
    </alternativeName>
</protein>
<sequence>MALLTAETFRLQFNNKRRLRRPYYPRKALLCYQLTPQNGSTPTRGYFENKKKCHAEICFINEIKSMGLDETQCYQVTCYLTWSPCSSCAWELVDFIKAHDHLNLGIFASRLYYHWCKPQQKGLRLLCGSQVPVEVMGFPEFADCWENFVDHEKPLSFNPYKMLEELDKNSRAIKRRLERIKIPGVRAQGRYMDILCDAEV</sequence>
<keyword id="KW-0002">3D-structure</keyword>
<keyword id="KW-0025">Alternative splicing</keyword>
<keyword id="KW-0051">Antiviral defense</keyword>
<keyword id="KW-0175">Coiled coil</keyword>
<keyword id="KW-0963">Cytoplasm</keyword>
<keyword id="KW-0378">Hydrolase</keyword>
<keyword id="KW-0391">Immunity</keyword>
<keyword id="KW-0399">Innate immunity</keyword>
<keyword id="KW-0479">Metal-binding</keyword>
<keyword id="KW-0539">Nucleus</keyword>
<keyword id="KW-1267">Proteomics identification</keyword>
<keyword id="KW-1185">Reference proteome</keyword>
<keyword id="KW-0832">Ubl conjugation</keyword>
<keyword id="KW-0862">Zinc</keyword>